<gene>
    <name evidence="1" type="primary">cynS</name>
    <name type="ordered locus">Rfer_3739</name>
</gene>
<protein>
    <recommendedName>
        <fullName evidence="1">Cyanate hydratase</fullName>
        <shortName evidence="1">Cyanase</shortName>
        <ecNumber evidence="1">4.2.1.104</ecNumber>
    </recommendedName>
    <alternativeName>
        <fullName evidence="1">Cyanate hydrolase</fullName>
    </alternativeName>
    <alternativeName>
        <fullName evidence="1">Cyanate lyase</fullName>
    </alternativeName>
</protein>
<proteinExistence type="inferred from homology"/>
<evidence type="ECO:0000255" key="1">
    <source>
        <dbReference type="HAMAP-Rule" id="MF_00535"/>
    </source>
</evidence>
<comment type="function">
    <text evidence="1">Catalyzes the reaction of cyanate with bicarbonate to produce ammonia and carbon dioxide.</text>
</comment>
<comment type="catalytic activity">
    <reaction evidence="1">
        <text>cyanate + hydrogencarbonate + 3 H(+) = NH4(+) + 2 CO2</text>
        <dbReference type="Rhea" id="RHEA:11120"/>
        <dbReference type="ChEBI" id="CHEBI:15378"/>
        <dbReference type="ChEBI" id="CHEBI:16526"/>
        <dbReference type="ChEBI" id="CHEBI:17544"/>
        <dbReference type="ChEBI" id="CHEBI:28938"/>
        <dbReference type="ChEBI" id="CHEBI:29195"/>
        <dbReference type="EC" id="4.2.1.104"/>
    </reaction>
</comment>
<comment type="similarity">
    <text evidence="1">Belongs to the cyanase family.</text>
</comment>
<reference key="1">
    <citation type="submission" date="2006-02" db="EMBL/GenBank/DDBJ databases">
        <title>Complete sequence of chromosome of Rhodoferax ferrireducens DSM 15236.</title>
        <authorList>
            <person name="Copeland A."/>
            <person name="Lucas S."/>
            <person name="Lapidus A."/>
            <person name="Barry K."/>
            <person name="Detter J.C."/>
            <person name="Glavina del Rio T."/>
            <person name="Hammon N."/>
            <person name="Israni S."/>
            <person name="Pitluck S."/>
            <person name="Brettin T."/>
            <person name="Bruce D."/>
            <person name="Han C."/>
            <person name="Tapia R."/>
            <person name="Gilna P."/>
            <person name="Kiss H."/>
            <person name="Schmutz J."/>
            <person name="Larimer F."/>
            <person name="Land M."/>
            <person name="Kyrpides N."/>
            <person name="Ivanova N."/>
            <person name="Richardson P."/>
        </authorList>
    </citation>
    <scope>NUCLEOTIDE SEQUENCE [LARGE SCALE GENOMIC DNA]</scope>
    <source>
        <strain>ATCC BAA-621 / DSM 15236 / T118</strain>
    </source>
</reference>
<dbReference type="EC" id="4.2.1.104" evidence="1"/>
<dbReference type="EMBL" id="CP000267">
    <property type="protein sequence ID" value="ABD71439.1"/>
    <property type="molecule type" value="Genomic_DNA"/>
</dbReference>
<dbReference type="RefSeq" id="WP_011466002.1">
    <property type="nucleotide sequence ID" value="NC_007908.1"/>
</dbReference>
<dbReference type="SMR" id="Q21S14"/>
<dbReference type="STRING" id="338969.Rfer_3739"/>
<dbReference type="KEGG" id="rfr:Rfer_3739"/>
<dbReference type="eggNOG" id="COG1513">
    <property type="taxonomic scope" value="Bacteria"/>
</dbReference>
<dbReference type="HOGENOM" id="CLU_103452_1_0_4"/>
<dbReference type="OrthoDB" id="9785870at2"/>
<dbReference type="Proteomes" id="UP000008332">
    <property type="component" value="Chromosome"/>
</dbReference>
<dbReference type="GO" id="GO:0008824">
    <property type="term" value="F:cyanate hydratase activity"/>
    <property type="evidence" value="ECO:0007669"/>
    <property type="project" value="UniProtKB-UniRule"/>
</dbReference>
<dbReference type="GO" id="GO:0003677">
    <property type="term" value="F:DNA binding"/>
    <property type="evidence" value="ECO:0007669"/>
    <property type="project" value="InterPro"/>
</dbReference>
<dbReference type="GO" id="GO:0009439">
    <property type="term" value="P:cyanate metabolic process"/>
    <property type="evidence" value="ECO:0007669"/>
    <property type="project" value="UniProtKB-UniRule"/>
</dbReference>
<dbReference type="CDD" id="cd00559">
    <property type="entry name" value="Cyanase_C"/>
    <property type="match status" value="1"/>
</dbReference>
<dbReference type="Gene3D" id="3.30.1160.10">
    <property type="entry name" value="Cyanate lyase, C-terminal domain"/>
    <property type="match status" value="1"/>
</dbReference>
<dbReference type="Gene3D" id="1.10.260.40">
    <property type="entry name" value="lambda repressor-like DNA-binding domains"/>
    <property type="match status" value="1"/>
</dbReference>
<dbReference type="HAMAP" id="MF_00535">
    <property type="entry name" value="Cyanate_hydrat"/>
    <property type="match status" value="1"/>
</dbReference>
<dbReference type="InterPro" id="IPR008076">
    <property type="entry name" value="Cyanase"/>
</dbReference>
<dbReference type="InterPro" id="IPR003712">
    <property type="entry name" value="Cyanate_lyase_C"/>
</dbReference>
<dbReference type="InterPro" id="IPR036581">
    <property type="entry name" value="Cyanate_lyase_C_sf"/>
</dbReference>
<dbReference type="InterPro" id="IPR048564">
    <property type="entry name" value="CYNS_N"/>
</dbReference>
<dbReference type="InterPro" id="IPR010982">
    <property type="entry name" value="Lambda_DNA-bd_dom_sf"/>
</dbReference>
<dbReference type="NCBIfam" id="TIGR00673">
    <property type="entry name" value="cynS"/>
    <property type="match status" value="1"/>
</dbReference>
<dbReference type="NCBIfam" id="NF002773">
    <property type="entry name" value="PRK02866.1"/>
    <property type="match status" value="1"/>
</dbReference>
<dbReference type="PANTHER" id="PTHR34186">
    <property type="entry name" value="CYANATE HYDRATASE"/>
    <property type="match status" value="1"/>
</dbReference>
<dbReference type="PANTHER" id="PTHR34186:SF2">
    <property type="entry name" value="CYANATE HYDRATASE"/>
    <property type="match status" value="1"/>
</dbReference>
<dbReference type="Pfam" id="PF02560">
    <property type="entry name" value="Cyanate_lyase"/>
    <property type="match status" value="1"/>
</dbReference>
<dbReference type="Pfam" id="PF21291">
    <property type="entry name" value="CYNS_N"/>
    <property type="match status" value="1"/>
</dbReference>
<dbReference type="PIRSF" id="PIRSF001263">
    <property type="entry name" value="Cyanate_hydratas"/>
    <property type="match status" value="1"/>
</dbReference>
<dbReference type="PRINTS" id="PR01693">
    <property type="entry name" value="CYANASE"/>
</dbReference>
<dbReference type="SMART" id="SM01116">
    <property type="entry name" value="Cyanate_lyase"/>
    <property type="match status" value="1"/>
</dbReference>
<dbReference type="SUPFAM" id="SSF55234">
    <property type="entry name" value="Cyanase C-terminal domain"/>
    <property type="match status" value="1"/>
</dbReference>
<dbReference type="SUPFAM" id="SSF47413">
    <property type="entry name" value="lambda repressor-like DNA-binding domains"/>
    <property type="match status" value="1"/>
</dbReference>
<feature type="chain" id="PRO_1000072538" description="Cyanate hydratase">
    <location>
        <begin position="1"/>
        <end position="147"/>
    </location>
</feature>
<feature type="active site" evidence="1">
    <location>
        <position position="88"/>
    </location>
</feature>
<feature type="active site" evidence="1">
    <location>
        <position position="91"/>
    </location>
</feature>
<feature type="active site" evidence="1">
    <location>
        <position position="114"/>
    </location>
</feature>
<organism>
    <name type="scientific">Albidiferax ferrireducens (strain ATCC BAA-621 / DSM 15236 / T118)</name>
    <name type="common">Rhodoferax ferrireducens</name>
    <dbReference type="NCBI Taxonomy" id="338969"/>
    <lineage>
        <taxon>Bacteria</taxon>
        <taxon>Pseudomonadati</taxon>
        <taxon>Pseudomonadota</taxon>
        <taxon>Betaproteobacteria</taxon>
        <taxon>Burkholderiales</taxon>
        <taxon>Comamonadaceae</taxon>
        <taxon>Rhodoferax</taxon>
    </lineage>
</organism>
<accession>Q21S14</accession>
<sequence length="147" mass="16595">MNRLEVTEKIISTKVTKGIKWEAVAKKVGLSKEWVTAACLGQMTLNAEQAKIVGKMFGLTVEEQKWLQVAPYKGSLPTLVPTDPLIYRWYEIVNVYGSTIKELIHEEFGDGIMSAIDFSMDIVRQPDPKGDRVNVVLSGKFLPYKQY</sequence>
<name>CYNS_ALBFT</name>
<keyword id="KW-0456">Lyase</keyword>
<keyword id="KW-1185">Reference proteome</keyword>